<proteinExistence type="predicted"/>
<name>Y065_SIFVH</name>
<reference key="1">
    <citation type="journal article" date="2000" name="Virology">
        <title>A novel lipothrixvirus, SIFV, of the extremely thermophilic crenarchaeon Sulfolobus.</title>
        <authorList>
            <person name="Arnold H.P."/>
            <person name="Zillig W."/>
            <person name="Ziese U."/>
            <person name="Holz I."/>
            <person name="Crosby M."/>
            <person name="Utterback T."/>
            <person name="Weidmann J.F."/>
            <person name="Umayam L.A."/>
            <person name="Teffera K."/>
            <person name="Kristjanson J.K."/>
            <person name="Klenk H.P."/>
            <person name="Nelson K.E."/>
            <person name="Fraser C.M."/>
        </authorList>
    </citation>
    <scope>NUCLEOTIDE SEQUENCE [GENOMIC DNA]</scope>
</reference>
<accession>Q914G7</accession>
<sequence>MISIADYFRQKDCDYWREYPHSYGKLDVFGKTIQIVGADCGSSALYFLMRGAKYIIQYEKEEHLRKRWEEACKYFNICDKAMMKNEWNGEYENADIFVIDCEGCEEHLNVDILKKYEQWCVGIHDWTKNRVELMRKMEGTIFTYVSDDGREMTLCKTS</sequence>
<gene>
    <name type="primary">SIFV0065</name>
</gene>
<organismHost>
    <name type="scientific">Saccharolobus islandicus</name>
    <name type="common">Sulfolobus islandicus</name>
    <dbReference type="NCBI Taxonomy" id="43080"/>
</organismHost>
<protein>
    <recommendedName>
        <fullName>Uncharacterized protein 65</fullName>
    </recommendedName>
</protein>
<keyword id="KW-1185">Reference proteome</keyword>
<feature type="chain" id="PRO_0000385394" description="Uncharacterized protein 65">
    <location>
        <begin position="1"/>
        <end position="158"/>
    </location>
</feature>
<dbReference type="EMBL" id="AF440571">
    <property type="protein sequence ID" value="AAL27774.1"/>
    <property type="molecule type" value="Genomic_DNA"/>
</dbReference>
<dbReference type="RefSeq" id="NP_445728.1">
    <property type="nucleotide sequence ID" value="NC_003214.2"/>
</dbReference>
<dbReference type="SMR" id="Q914G7"/>
<dbReference type="GeneID" id="922292"/>
<dbReference type="KEGG" id="vg:922292"/>
<dbReference type="Proteomes" id="UP000007017">
    <property type="component" value="Segment"/>
</dbReference>
<organism>
    <name type="scientific">Sulfolobus islandicus filamentous virus (isolate Iceland/Hveragerdi)</name>
    <name type="common">SIFV</name>
    <dbReference type="NCBI Taxonomy" id="654908"/>
    <lineage>
        <taxon>Viruses</taxon>
        <taxon>Adnaviria</taxon>
        <taxon>Zilligvirae</taxon>
        <taxon>Taleaviricota</taxon>
        <taxon>Tokiviricetes</taxon>
        <taxon>Ligamenvirales</taxon>
        <taxon>Lipothrixviridae</taxon>
        <taxon>Betalipothrixvirus</taxon>
        <taxon>Sulfolobus islandicus filamentous virus</taxon>
    </lineage>
</organism>